<reference key="1">
    <citation type="journal article" date="2001" name="Mol. Biol. Evol.">
        <title>Mechanisms for evolving hypervariability: the case of conopeptides.</title>
        <authorList>
            <person name="Conticello S.G."/>
            <person name="Gilad Y."/>
            <person name="Avidan N."/>
            <person name="Ben-Asher E."/>
            <person name="Levy Z."/>
            <person name="Fainzilber M."/>
        </authorList>
    </citation>
    <scope>NUCLEOTIDE SEQUENCE [MRNA]</scope>
    <source>
        <tissue>Venom duct</tissue>
    </source>
</reference>
<keyword id="KW-0165">Cleavage on pair of basic residues</keyword>
<keyword id="KW-1015">Disulfide bond</keyword>
<keyword id="KW-0960">Knottin</keyword>
<keyword id="KW-0528">Neurotoxin</keyword>
<keyword id="KW-0964">Secreted</keyword>
<keyword id="KW-0732">Signal</keyword>
<keyword id="KW-0800">Toxin</keyword>
<protein>
    <recommendedName>
        <fullName>Conotoxin VnMEKL-0223</fullName>
    </recommendedName>
</protein>
<proteinExistence type="evidence at transcript level"/>
<accession>Q9BPC8</accession>
<feature type="signal peptide" evidence="2">
    <location>
        <begin position="1"/>
        <end position="19"/>
    </location>
</feature>
<feature type="propeptide" id="PRO_0000404830" evidence="1">
    <location>
        <begin position="20"/>
        <end position="37"/>
    </location>
</feature>
<feature type="peptide" id="PRO_0000404831" description="Conotoxin VnMEKL-0223">
    <location>
        <begin position="41"/>
        <end position="77"/>
    </location>
</feature>
<feature type="disulfide bond" evidence="1">
    <location>
        <begin position="51"/>
        <end position="65"/>
    </location>
</feature>
<feature type="disulfide bond" evidence="1">
    <location>
        <begin position="58"/>
        <end position="69"/>
    </location>
</feature>
<feature type="disulfide bond" evidence="1">
    <location>
        <begin position="64"/>
        <end position="74"/>
    </location>
</feature>
<dbReference type="EMBL" id="AF215006">
    <property type="protein sequence ID" value="AAG60434.1"/>
    <property type="molecule type" value="mRNA"/>
</dbReference>
<dbReference type="SMR" id="Q9BPC8"/>
<dbReference type="ConoServer" id="693">
    <property type="toxin name" value="Vn6.1 precursor"/>
</dbReference>
<dbReference type="GO" id="GO:0005576">
    <property type="term" value="C:extracellular region"/>
    <property type="evidence" value="ECO:0007669"/>
    <property type="project" value="UniProtKB-SubCell"/>
</dbReference>
<dbReference type="GO" id="GO:0008200">
    <property type="term" value="F:ion channel inhibitor activity"/>
    <property type="evidence" value="ECO:0007669"/>
    <property type="project" value="InterPro"/>
</dbReference>
<dbReference type="GO" id="GO:0090729">
    <property type="term" value="F:toxin activity"/>
    <property type="evidence" value="ECO:0007669"/>
    <property type="project" value="UniProtKB-KW"/>
</dbReference>
<dbReference type="InterPro" id="IPR004214">
    <property type="entry name" value="Conotoxin"/>
</dbReference>
<dbReference type="Pfam" id="PF02950">
    <property type="entry name" value="Conotoxin"/>
    <property type="match status" value="1"/>
</dbReference>
<organism>
    <name type="scientific">Conus ventricosus</name>
    <name type="common">Mediterranean cone</name>
    <dbReference type="NCBI Taxonomy" id="117992"/>
    <lineage>
        <taxon>Eukaryota</taxon>
        <taxon>Metazoa</taxon>
        <taxon>Spiralia</taxon>
        <taxon>Lophotrochozoa</taxon>
        <taxon>Mollusca</taxon>
        <taxon>Gastropoda</taxon>
        <taxon>Caenogastropoda</taxon>
        <taxon>Neogastropoda</taxon>
        <taxon>Conoidea</taxon>
        <taxon>Conidae</taxon>
        <taxon>Conus</taxon>
        <taxon>Lautoconus</taxon>
    </lineage>
</organism>
<comment type="subcellular location">
    <subcellularLocation>
        <location evidence="1">Secreted</location>
    </subcellularLocation>
</comment>
<comment type="tissue specificity">
    <text>Expressed by the venom duct.</text>
</comment>
<comment type="domain">
    <text evidence="1">The presence of a 'disulfide through disulfide knot' structurally defines this protein as a knottin.</text>
</comment>
<comment type="domain">
    <text>The cysteine framework is VI/VII (C-C-CC-C-C).</text>
</comment>
<comment type="similarity">
    <text evidence="3">Belongs to the conotoxin O2 superfamily.</text>
</comment>
<sequence>MQKLTILLLVAAVLMSTQALIKGGGEKRPKEKIKFLSKRKTTAESWWEGECSGWSVYCTQHSECCSGECTGNYCELF</sequence>
<evidence type="ECO:0000250" key="1"/>
<evidence type="ECO:0000255" key="2"/>
<evidence type="ECO:0000305" key="3"/>
<name>O26N_CONVE</name>